<gene>
    <name type="primary">SRP</name>
</gene>
<organism>
    <name type="scientific">Phaseolus vulgaris</name>
    <name type="common">Kidney bean</name>
    <name type="synonym">French bean</name>
    <dbReference type="NCBI Taxonomy" id="3885"/>
    <lineage>
        <taxon>Eukaryota</taxon>
        <taxon>Viridiplantae</taxon>
        <taxon>Streptophyta</taxon>
        <taxon>Embryophyta</taxon>
        <taxon>Tracheophyta</taxon>
        <taxon>Spermatophyta</taxon>
        <taxon>Magnoliopsida</taxon>
        <taxon>eudicotyledons</taxon>
        <taxon>Gunneridae</taxon>
        <taxon>Pentapetalae</taxon>
        <taxon>rosids</taxon>
        <taxon>fabids</taxon>
        <taxon>Fabales</taxon>
        <taxon>Fabaceae</taxon>
        <taxon>Papilionoideae</taxon>
        <taxon>50 kb inversion clade</taxon>
        <taxon>NPAAA clade</taxon>
        <taxon>indigoferoid/millettioid clade</taxon>
        <taxon>Phaseoleae</taxon>
        <taxon>Phaseolus</taxon>
    </lineage>
</organism>
<comment type="function">
    <text>Plays a role in plant defense.</text>
</comment>
<comment type="induction">
    <text>Regulated by heavy metal stress, wounding, and virus infection.</text>
</comment>
<comment type="similarity">
    <text evidence="1">Belongs to the REF/SRPP family.</text>
</comment>
<evidence type="ECO:0000305" key="1"/>
<sequence length="167" mass="18522">MRCAILYSYAKERAGPLKPGVNTVEDAVKTVVAPVYDRFHLVPVELLKYADRKVGELDRHVPSNVKKVSSQARSVVSEVRRDGVSTFAKTVYSKYEPTAEQCAVSAWRKLNQLPLFPQVANAVLPKAAYCTEKYNEVIVSSAEKGYRVSAYLPLVPTEKIAKVFSGN</sequence>
<reference key="1">
    <citation type="submission" date="1996-04" db="EMBL/GenBank/DDBJ databases">
        <authorList>
            <person name="Chai T.Y."/>
            <person name="Burkard G."/>
        </authorList>
    </citation>
    <scope>NUCLEOTIDE SEQUENCE [MRNA]</scope>
    <source>
        <strain>cv. Saxa</strain>
    </source>
</reference>
<feature type="chain" id="PRO_0000221062" description="Stress-related protein">
    <location>
        <begin position="1"/>
        <end position="167"/>
    </location>
</feature>
<dbReference type="EMBL" id="U54704">
    <property type="protein sequence ID" value="AAB00555.1"/>
    <property type="molecule type" value="mRNA"/>
</dbReference>
<dbReference type="PIR" id="T11750">
    <property type="entry name" value="T11750"/>
</dbReference>
<dbReference type="eggNOG" id="ENOG502QUI7">
    <property type="taxonomic scope" value="Eukaryota"/>
</dbReference>
<dbReference type="InterPro" id="IPR008802">
    <property type="entry name" value="REF"/>
</dbReference>
<dbReference type="PANTHER" id="PTHR33732">
    <property type="entry name" value="REF/SRPP-LIKE PROTEIN OS05G0151300/LOC_OS05G05940"/>
    <property type="match status" value="1"/>
</dbReference>
<dbReference type="PANTHER" id="PTHR33732:SF9">
    <property type="entry name" value="REF_SRPP-LIKE PROTEIN OS05G0151300_LOC_OS05G05940"/>
    <property type="match status" value="1"/>
</dbReference>
<dbReference type="Pfam" id="PF05755">
    <property type="entry name" value="REF"/>
    <property type="match status" value="1"/>
</dbReference>
<protein>
    <recommendedName>
        <fullName>Stress-related protein</fullName>
    </recommendedName>
    <alternativeName>
        <fullName>PvSRP</fullName>
    </alternativeName>
</protein>
<proteinExistence type="evidence at transcript level"/>
<accession>Q41112</accession>
<name>SRP_PHAVU</name>